<dbReference type="EC" id="1.8.4.8" evidence="1"/>
<dbReference type="EMBL" id="CP001233">
    <property type="protein sequence ID" value="ACP04698.1"/>
    <property type="molecule type" value="Genomic_DNA"/>
</dbReference>
<dbReference type="RefSeq" id="WP_001133791.1">
    <property type="nucleotide sequence ID" value="NC_012578.1"/>
</dbReference>
<dbReference type="SMR" id="C3LRB8"/>
<dbReference type="KEGG" id="vcm:VCM66_0371"/>
<dbReference type="HOGENOM" id="CLU_044089_3_0_6"/>
<dbReference type="UniPathway" id="UPA00140">
    <property type="reaction ID" value="UER00206"/>
</dbReference>
<dbReference type="Proteomes" id="UP000001217">
    <property type="component" value="Chromosome I"/>
</dbReference>
<dbReference type="GO" id="GO:0005737">
    <property type="term" value="C:cytoplasm"/>
    <property type="evidence" value="ECO:0007669"/>
    <property type="project" value="UniProtKB-SubCell"/>
</dbReference>
<dbReference type="GO" id="GO:0004604">
    <property type="term" value="F:phosphoadenylyl-sulfate reductase (thioredoxin) activity"/>
    <property type="evidence" value="ECO:0007669"/>
    <property type="project" value="UniProtKB-UniRule"/>
</dbReference>
<dbReference type="GO" id="GO:0070814">
    <property type="term" value="P:hydrogen sulfide biosynthetic process"/>
    <property type="evidence" value="ECO:0007669"/>
    <property type="project" value="UniProtKB-UniRule"/>
</dbReference>
<dbReference type="GO" id="GO:0019379">
    <property type="term" value="P:sulfate assimilation, phosphoadenylyl sulfate reduction by phosphoadenylyl-sulfate reductase (thioredoxin)"/>
    <property type="evidence" value="ECO:0007669"/>
    <property type="project" value="UniProtKB-UniRule"/>
</dbReference>
<dbReference type="CDD" id="cd23945">
    <property type="entry name" value="PAPS_reductase"/>
    <property type="match status" value="1"/>
</dbReference>
<dbReference type="FunFam" id="3.40.50.620:FF:000043">
    <property type="entry name" value="Phosphoadenosine phosphosulfate reductase"/>
    <property type="match status" value="1"/>
</dbReference>
<dbReference type="Gene3D" id="3.40.50.620">
    <property type="entry name" value="HUPs"/>
    <property type="match status" value="1"/>
</dbReference>
<dbReference type="HAMAP" id="MF_00063">
    <property type="entry name" value="CysH"/>
    <property type="match status" value="1"/>
</dbReference>
<dbReference type="InterPro" id="IPR004511">
    <property type="entry name" value="PAPS/APS_Rdtase"/>
</dbReference>
<dbReference type="InterPro" id="IPR002500">
    <property type="entry name" value="PAPS_reduct_dom"/>
</dbReference>
<dbReference type="InterPro" id="IPR011800">
    <property type="entry name" value="PAPS_reductase_CysH"/>
</dbReference>
<dbReference type="InterPro" id="IPR014729">
    <property type="entry name" value="Rossmann-like_a/b/a_fold"/>
</dbReference>
<dbReference type="NCBIfam" id="TIGR00434">
    <property type="entry name" value="cysH"/>
    <property type="match status" value="1"/>
</dbReference>
<dbReference type="NCBIfam" id="TIGR02057">
    <property type="entry name" value="PAPS_reductase"/>
    <property type="match status" value="1"/>
</dbReference>
<dbReference type="NCBIfam" id="NF002537">
    <property type="entry name" value="PRK02090.1"/>
    <property type="match status" value="1"/>
</dbReference>
<dbReference type="PANTHER" id="PTHR46509">
    <property type="entry name" value="PHOSPHOADENOSINE PHOSPHOSULFATE REDUCTASE"/>
    <property type="match status" value="1"/>
</dbReference>
<dbReference type="PANTHER" id="PTHR46509:SF1">
    <property type="entry name" value="PHOSPHOADENOSINE PHOSPHOSULFATE REDUCTASE"/>
    <property type="match status" value="1"/>
</dbReference>
<dbReference type="Pfam" id="PF01507">
    <property type="entry name" value="PAPS_reduct"/>
    <property type="match status" value="1"/>
</dbReference>
<dbReference type="PIRSF" id="PIRSF000857">
    <property type="entry name" value="PAPS_reductase"/>
    <property type="match status" value="1"/>
</dbReference>
<dbReference type="SUPFAM" id="SSF52402">
    <property type="entry name" value="Adenine nucleotide alpha hydrolases-like"/>
    <property type="match status" value="1"/>
</dbReference>
<evidence type="ECO:0000255" key="1">
    <source>
        <dbReference type="HAMAP-Rule" id="MF_00063"/>
    </source>
</evidence>
<feature type="chain" id="PRO_1000117932" description="Phosphoadenosine 5'-phosphosulfate reductase">
    <location>
        <begin position="1"/>
        <end position="253"/>
    </location>
</feature>
<feature type="active site" description="Nucleophile; cysteine thiosulfonate intermediate" evidence="1">
    <location>
        <position position="242"/>
    </location>
</feature>
<reference key="1">
    <citation type="journal article" date="2008" name="PLoS ONE">
        <title>A recalibrated molecular clock and independent origins for the cholera pandemic clones.</title>
        <authorList>
            <person name="Feng L."/>
            <person name="Reeves P.R."/>
            <person name="Lan R."/>
            <person name="Ren Y."/>
            <person name="Gao C."/>
            <person name="Zhou Z."/>
            <person name="Ren Y."/>
            <person name="Cheng J."/>
            <person name="Wang W."/>
            <person name="Wang J."/>
            <person name="Qian W."/>
            <person name="Li D."/>
            <person name="Wang L."/>
        </authorList>
    </citation>
    <scope>NUCLEOTIDE SEQUENCE [LARGE SCALE GENOMIC DNA]</scope>
    <source>
        <strain>M66-2</strain>
    </source>
</reference>
<keyword id="KW-0963">Cytoplasm</keyword>
<keyword id="KW-0560">Oxidoreductase</keyword>
<protein>
    <recommendedName>
        <fullName evidence="1">Phosphoadenosine 5'-phosphosulfate reductase</fullName>
        <shortName evidence="1">PAPS reductase</shortName>
        <ecNumber evidence="1">1.8.4.8</ecNumber>
    </recommendedName>
    <alternativeName>
        <fullName evidence="1">3'-phosphoadenylylsulfate reductase</fullName>
    </alternativeName>
    <alternativeName>
        <fullName evidence="1">PAPS reductase, thioredoxin dependent</fullName>
    </alternativeName>
    <alternativeName>
        <fullName evidence="1">PAPS sulfotransferase</fullName>
    </alternativeName>
    <alternativeName>
        <fullName evidence="1">PAdoPS reductase</fullName>
    </alternativeName>
</protein>
<proteinExistence type="inferred from homology"/>
<comment type="function">
    <text evidence="1">Catalyzes the formation of sulfite from phosphoadenosine 5'-phosphosulfate (PAPS) using thioredoxin as an electron donor.</text>
</comment>
<comment type="catalytic activity">
    <reaction evidence="1">
        <text>[thioredoxin]-disulfide + sulfite + adenosine 3',5'-bisphosphate + 2 H(+) = [thioredoxin]-dithiol + 3'-phosphoadenylyl sulfate</text>
        <dbReference type="Rhea" id="RHEA:11724"/>
        <dbReference type="Rhea" id="RHEA-COMP:10698"/>
        <dbReference type="Rhea" id="RHEA-COMP:10700"/>
        <dbReference type="ChEBI" id="CHEBI:15378"/>
        <dbReference type="ChEBI" id="CHEBI:17359"/>
        <dbReference type="ChEBI" id="CHEBI:29950"/>
        <dbReference type="ChEBI" id="CHEBI:50058"/>
        <dbReference type="ChEBI" id="CHEBI:58339"/>
        <dbReference type="ChEBI" id="CHEBI:58343"/>
        <dbReference type="EC" id="1.8.4.8"/>
    </reaction>
</comment>
<comment type="pathway">
    <text evidence="1">Sulfur metabolism; hydrogen sulfide biosynthesis; sulfite from sulfate: step 3/3.</text>
</comment>
<comment type="subcellular location">
    <subcellularLocation>
        <location evidence="1">Cytoplasm</location>
    </subcellularLocation>
</comment>
<comment type="similarity">
    <text evidence="1">Belongs to the PAPS reductase family. CysH subfamily.</text>
</comment>
<sequence length="253" mass="29249">MPNRTVPTLEELLTLNKVQQTLRLTEVNQHLESLTAQERVVWGLENLQGNHALSSSFGIQAAVMLHLLTSVKSDIPVVLTDTGYLFPETYQFIDELTERLNLNLKVYSAPVSAAWQEARYGKLWEQGVEGIERYNQINKVEPMRRALDELNIGTWFSGLRREQSQSRASLPILSVQNGVFKFLPVIDWTNKEVHYYLKDNDLPYHPLWEQGYLSVGDTHTTQKWQPGMNEEQTRFFGLKRECGLHEDHNDTHQ</sequence>
<name>CYSH_VIBCM</name>
<organism>
    <name type="scientific">Vibrio cholerae serotype O1 (strain M66-2)</name>
    <dbReference type="NCBI Taxonomy" id="579112"/>
    <lineage>
        <taxon>Bacteria</taxon>
        <taxon>Pseudomonadati</taxon>
        <taxon>Pseudomonadota</taxon>
        <taxon>Gammaproteobacteria</taxon>
        <taxon>Vibrionales</taxon>
        <taxon>Vibrionaceae</taxon>
        <taxon>Vibrio</taxon>
    </lineage>
</organism>
<accession>C3LRB8</accession>
<gene>
    <name evidence="1" type="primary">cysH</name>
    <name type="ordered locus">VCM66_0371</name>
</gene>